<organism>
    <name type="scientific">Homo sapiens</name>
    <name type="common">Human</name>
    <dbReference type="NCBI Taxonomy" id="9606"/>
    <lineage>
        <taxon>Eukaryota</taxon>
        <taxon>Metazoa</taxon>
        <taxon>Chordata</taxon>
        <taxon>Craniata</taxon>
        <taxon>Vertebrata</taxon>
        <taxon>Euteleostomi</taxon>
        <taxon>Mammalia</taxon>
        <taxon>Eutheria</taxon>
        <taxon>Euarchontoglires</taxon>
        <taxon>Primates</taxon>
        <taxon>Haplorrhini</taxon>
        <taxon>Catarrhini</taxon>
        <taxon>Hominidae</taxon>
        <taxon>Homo</taxon>
    </lineage>
</organism>
<gene>
    <name type="primary">OR6C70</name>
</gene>
<name>O6C70_HUMAN</name>
<evidence type="ECO:0000255" key="1"/>
<evidence type="ECO:0000255" key="2">
    <source>
        <dbReference type="PROSITE-ProRule" id="PRU00521"/>
    </source>
</evidence>
<evidence type="ECO:0000305" key="3"/>
<dbReference type="EMBL" id="AC122685">
    <property type="status" value="NOT_ANNOTATED_CDS"/>
    <property type="molecule type" value="Genomic_DNA"/>
</dbReference>
<dbReference type="EMBL" id="CH471054">
    <property type="protein sequence ID" value="EAW96813.1"/>
    <property type="molecule type" value="Genomic_DNA"/>
</dbReference>
<dbReference type="CCDS" id="CCDS31825.1"/>
<dbReference type="RefSeq" id="NP_001005499.1">
    <property type="nucleotide sequence ID" value="NM_001005499.1"/>
</dbReference>
<dbReference type="SMR" id="A6NIJ9"/>
<dbReference type="BioGRID" id="133517">
    <property type="interactions" value="1"/>
</dbReference>
<dbReference type="FunCoup" id="A6NIJ9">
    <property type="interactions" value="418"/>
</dbReference>
<dbReference type="IntAct" id="A6NIJ9">
    <property type="interactions" value="1"/>
</dbReference>
<dbReference type="STRING" id="9606.ENSP00000329153"/>
<dbReference type="GlyCosmos" id="A6NIJ9">
    <property type="glycosylation" value="1 site, No reported glycans"/>
</dbReference>
<dbReference type="GlyGen" id="A6NIJ9">
    <property type="glycosylation" value="1 site"/>
</dbReference>
<dbReference type="iPTMnet" id="A6NIJ9"/>
<dbReference type="PhosphoSitePlus" id="A6NIJ9"/>
<dbReference type="BioMuta" id="OR6C70"/>
<dbReference type="jPOST" id="A6NIJ9"/>
<dbReference type="MassIVE" id="A6NIJ9"/>
<dbReference type="PaxDb" id="9606-ENSP00000329153"/>
<dbReference type="Antibodypedia" id="15449">
    <property type="antibodies" value="62 antibodies from 19 providers"/>
</dbReference>
<dbReference type="DNASU" id="390327"/>
<dbReference type="Ensembl" id="ENST00000327335.4">
    <property type="protein sequence ID" value="ENSP00000329153.4"/>
    <property type="gene ID" value="ENSG00000184954.4"/>
</dbReference>
<dbReference type="GeneID" id="390327"/>
<dbReference type="KEGG" id="hsa:390327"/>
<dbReference type="MANE-Select" id="ENST00000327335.4">
    <property type="protein sequence ID" value="ENSP00000329153.4"/>
    <property type="RefSeq nucleotide sequence ID" value="NM_001005499.1"/>
    <property type="RefSeq protein sequence ID" value="NP_001005499.1"/>
</dbReference>
<dbReference type="UCSC" id="uc010spn.2">
    <property type="organism name" value="human"/>
</dbReference>
<dbReference type="AGR" id="HGNC:31299"/>
<dbReference type="CTD" id="390327"/>
<dbReference type="GeneCards" id="OR6C70"/>
<dbReference type="HGNC" id="HGNC:31299">
    <property type="gene designation" value="OR6C70"/>
</dbReference>
<dbReference type="HPA" id="ENSG00000184954">
    <property type="expression patterns" value="Not detected"/>
</dbReference>
<dbReference type="neXtProt" id="NX_A6NIJ9"/>
<dbReference type="PharmGKB" id="PA134915898"/>
<dbReference type="VEuPathDB" id="HostDB:ENSG00000184954"/>
<dbReference type="eggNOG" id="ENOG502RDVH">
    <property type="taxonomic scope" value="Eukaryota"/>
</dbReference>
<dbReference type="GeneTree" id="ENSGT01130000278269"/>
<dbReference type="HOGENOM" id="CLU_012526_0_1_1"/>
<dbReference type="InParanoid" id="A6NIJ9"/>
<dbReference type="OMA" id="SYIMKTI"/>
<dbReference type="OrthoDB" id="9902777at2759"/>
<dbReference type="PAN-GO" id="A6NIJ9">
    <property type="GO annotations" value="1 GO annotation based on evolutionary models"/>
</dbReference>
<dbReference type="PhylomeDB" id="A6NIJ9"/>
<dbReference type="TreeFam" id="TF336833"/>
<dbReference type="PathwayCommons" id="A6NIJ9"/>
<dbReference type="Reactome" id="R-HSA-9752946">
    <property type="pathway name" value="Expression and translocation of olfactory receptors"/>
</dbReference>
<dbReference type="BioGRID-ORCS" id="390327">
    <property type="hits" value="11 hits in 707 CRISPR screens"/>
</dbReference>
<dbReference type="GenomeRNAi" id="390327"/>
<dbReference type="Pharos" id="A6NIJ9">
    <property type="development level" value="Tdark"/>
</dbReference>
<dbReference type="PRO" id="PR:A6NIJ9"/>
<dbReference type="Proteomes" id="UP000005640">
    <property type="component" value="Chromosome 12"/>
</dbReference>
<dbReference type="RNAct" id="A6NIJ9">
    <property type="molecule type" value="protein"/>
</dbReference>
<dbReference type="Bgee" id="ENSG00000184954">
    <property type="expression patterns" value="Expressed in cell and 3 other cell types or tissues"/>
</dbReference>
<dbReference type="GO" id="GO:0005886">
    <property type="term" value="C:plasma membrane"/>
    <property type="evidence" value="ECO:0007669"/>
    <property type="project" value="UniProtKB-SubCell"/>
</dbReference>
<dbReference type="GO" id="GO:0004930">
    <property type="term" value="F:G protein-coupled receptor activity"/>
    <property type="evidence" value="ECO:0007669"/>
    <property type="project" value="UniProtKB-KW"/>
</dbReference>
<dbReference type="GO" id="GO:0004984">
    <property type="term" value="F:olfactory receptor activity"/>
    <property type="evidence" value="ECO:0000318"/>
    <property type="project" value="GO_Central"/>
</dbReference>
<dbReference type="CDD" id="cd15912">
    <property type="entry name" value="7tmA_OR6C-like"/>
    <property type="match status" value="1"/>
</dbReference>
<dbReference type="FunFam" id="1.20.1070.10:FF:000013">
    <property type="entry name" value="Olfactory receptor"/>
    <property type="match status" value="1"/>
</dbReference>
<dbReference type="Gene3D" id="1.20.1070.10">
    <property type="entry name" value="Rhodopsin 7-helix transmembrane proteins"/>
    <property type="match status" value="1"/>
</dbReference>
<dbReference type="InterPro" id="IPR000276">
    <property type="entry name" value="GPCR_Rhodpsn"/>
</dbReference>
<dbReference type="InterPro" id="IPR017452">
    <property type="entry name" value="GPCR_Rhodpsn_7TM"/>
</dbReference>
<dbReference type="InterPro" id="IPR000725">
    <property type="entry name" value="Olfact_rcpt"/>
</dbReference>
<dbReference type="InterPro" id="IPR047132">
    <property type="entry name" value="Olfact_rcpt_6C-like"/>
</dbReference>
<dbReference type="PANTHER" id="PTHR26454">
    <property type="entry name" value="OLFACTORY RECEPTOR"/>
    <property type="match status" value="1"/>
</dbReference>
<dbReference type="PANTHER" id="PTHR26454:SF17">
    <property type="entry name" value="OLFACTORY RECEPTOR 6C70"/>
    <property type="match status" value="1"/>
</dbReference>
<dbReference type="Pfam" id="PF13853">
    <property type="entry name" value="7tm_4"/>
    <property type="match status" value="1"/>
</dbReference>
<dbReference type="PRINTS" id="PR00237">
    <property type="entry name" value="GPCRRHODOPSN"/>
</dbReference>
<dbReference type="PRINTS" id="PR00245">
    <property type="entry name" value="OLFACTORYR"/>
</dbReference>
<dbReference type="SUPFAM" id="SSF81321">
    <property type="entry name" value="Family A G protein-coupled receptor-like"/>
    <property type="match status" value="1"/>
</dbReference>
<dbReference type="PROSITE" id="PS00237">
    <property type="entry name" value="G_PROTEIN_RECEP_F1_1"/>
    <property type="match status" value="1"/>
</dbReference>
<dbReference type="PROSITE" id="PS50262">
    <property type="entry name" value="G_PROTEIN_RECEP_F1_2"/>
    <property type="match status" value="1"/>
</dbReference>
<accession>A6NIJ9</accession>
<reference key="1">
    <citation type="journal article" date="2006" name="Nature">
        <title>The finished DNA sequence of human chromosome 12.</title>
        <authorList>
            <person name="Scherer S.E."/>
            <person name="Muzny D.M."/>
            <person name="Buhay C.J."/>
            <person name="Chen R."/>
            <person name="Cree A."/>
            <person name="Ding Y."/>
            <person name="Dugan-Rocha S."/>
            <person name="Gill R."/>
            <person name="Gunaratne P."/>
            <person name="Harris R.A."/>
            <person name="Hawes A.C."/>
            <person name="Hernandez J."/>
            <person name="Hodgson A.V."/>
            <person name="Hume J."/>
            <person name="Jackson A."/>
            <person name="Khan Z.M."/>
            <person name="Kovar-Smith C."/>
            <person name="Lewis L.R."/>
            <person name="Lozado R.J."/>
            <person name="Metzker M.L."/>
            <person name="Milosavljevic A."/>
            <person name="Miner G.R."/>
            <person name="Montgomery K.T."/>
            <person name="Morgan M.B."/>
            <person name="Nazareth L.V."/>
            <person name="Scott G."/>
            <person name="Sodergren E."/>
            <person name="Song X.-Z."/>
            <person name="Steffen D."/>
            <person name="Lovering R.C."/>
            <person name="Wheeler D.A."/>
            <person name="Worley K.C."/>
            <person name="Yuan Y."/>
            <person name="Zhang Z."/>
            <person name="Adams C.Q."/>
            <person name="Ansari-Lari M.A."/>
            <person name="Ayele M."/>
            <person name="Brown M.J."/>
            <person name="Chen G."/>
            <person name="Chen Z."/>
            <person name="Clerc-Blankenburg K.P."/>
            <person name="Davis C."/>
            <person name="Delgado O."/>
            <person name="Dinh H.H."/>
            <person name="Draper H."/>
            <person name="Gonzalez-Garay M.L."/>
            <person name="Havlak P."/>
            <person name="Jackson L.R."/>
            <person name="Jacob L.S."/>
            <person name="Kelly S.H."/>
            <person name="Li L."/>
            <person name="Li Z."/>
            <person name="Liu J."/>
            <person name="Liu W."/>
            <person name="Lu J."/>
            <person name="Maheshwari M."/>
            <person name="Nguyen B.-V."/>
            <person name="Okwuonu G.O."/>
            <person name="Pasternak S."/>
            <person name="Perez L.M."/>
            <person name="Plopper F.J.H."/>
            <person name="Santibanez J."/>
            <person name="Shen H."/>
            <person name="Tabor P.E."/>
            <person name="Verduzco D."/>
            <person name="Waldron L."/>
            <person name="Wang Q."/>
            <person name="Williams G.A."/>
            <person name="Zhang J."/>
            <person name="Zhou J."/>
            <person name="Allen C.C."/>
            <person name="Amin A.G."/>
            <person name="Anyalebechi V."/>
            <person name="Bailey M."/>
            <person name="Barbaria J.A."/>
            <person name="Bimage K.E."/>
            <person name="Bryant N.P."/>
            <person name="Burch P.E."/>
            <person name="Burkett C.E."/>
            <person name="Burrell K.L."/>
            <person name="Calderon E."/>
            <person name="Cardenas V."/>
            <person name="Carter K."/>
            <person name="Casias K."/>
            <person name="Cavazos I."/>
            <person name="Cavazos S.R."/>
            <person name="Ceasar H."/>
            <person name="Chacko J."/>
            <person name="Chan S.N."/>
            <person name="Chavez D."/>
            <person name="Christopoulos C."/>
            <person name="Chu J."/>
            <person name="Cockrell R."/>
            <person name="Cox C.D."/>
            <person name="Dang M."/>
            <person name="Dathorne S.R."/>
            <person name="David R."/>
            <person name="Davis C.M."/>
            <person name="Davy-Carroll L."/>
            <person name="Deshazo D.R."/>
            <person name="Donlin J.E."/>
            <person name="D'Souza L."/>
            <person name="Eaves K.A."/>
            <person name="Egan A."/>
            <person name="Emery-Cohen A.J."/>
            <person name="Escotto M."/>
            <person name="Flagg N."/>
            <person name="Forbes L.D."/>
            <person name="Gabisi A.M."/>
            <person name="Garza M."/>
            <person name="Hamilton C."/>
            <person name="Henderson N."/>
            <person name="Hernandez O."/>
            <person name="Hines S."/>
            <person name="Hogues M.E."/>
            <person name="Huang M."/>
            <person name="Idlebird D.G."/>
            <person name="Johnson R."/>
            <person name="Jolivet A."/>
            <person name="Jones S."/>
            <person name="Kagan R."/>
            <person name="King L.M."/>
            <person name="Leal B."/>
            <person name="Lebow H."/>
            <person name="Lee S."/>
            <person name="LeVan J.M."/>
            <person name="Lewis L.C."/>
            <person name="London P."/>
            <person name="Lorensuhewa L.M."/>
            <person name="Loulseged H."/>
            <person name="Lovett D.A."/>
            <person name="Lucier A."/>
            <person name="Lucier R.L."/>
            <person name="Ma J."/>
            <person name="Madu R.C."/>
            <person name="Mapua P."/>
            <person name="Martindale A.D."/>
            <person name="Martinez E."/>
            <person name="Massey E."/>
            <person name="Mawhiney S."/>
            <person name="Meador M.G."/>
            <person name="Mendez S."/>
            <person name="Mercado C."/>
            <person name="Mercado I.C."/>
            <person name="Merritt C.E."/>
            <person name="Miner Z.L."/>
            <person name="Minja E."/>
            <person name="Mitchell T."/>
            <person name="Mohabbat F."/>
            <person name="Mohabbat K."/>
            <person name="Montgomery B."/>
            <person name="Moore N."/>
            <person name="Morris S."/>
            <person name="Munidasa M."/>
            <person name="Ngo R.N."/>
            <person name="Nguyen N.B."/>
            <person name="Nickerson E."/>
            <person name="Nwaokelemeh O.O."/>
            <person name="Nwokenkwo S."/>
            <person name="Obregon M."/>
            <person name="Oguh M."/>
            <person name="Oragunye N."/>
            <person name="Oviedo R.J."/>
            <person name="Parish B.J."/>
            <person name="Parker D.N."/>
            <person name="Parrish J."/>
            <person name="Parks K.L."/>
            <person name="Paul H.A."/>
            <person name="Payton B.A."/>
            <person name="Perez A."/>
            <person name="Perrin W."/>
            <person name="Pickens A."/>
            <person name="Primus E.L."/>
            <person name="Pu L.-L."/>
            <person name="Puazo M."/>
            <person name="Quiles M.M."/>
            <person name="Quiroz J.B."/>
            <person name="Rabata D."/>
            <person name="Reeves K."/>
            <person name="Ruiz S.J."/>
            <person name="Shao H."/>
            <person name="Sisson I."/>
            <person name="Sonaike T."/>
            <person name="Sorelle R.P."/>
            <person name="Sutton A.E."/>
            <person name="Svatek A.F."/>
            <person name="Svetz L.A."/>
            <person name="Tamerisa K.S."/>
            <person name="Taylor T.R."/>
            <person name="Teague B."/>
            <person name="Thomas N."/>
            <person name="Thorn R.D."/>
            <person name="Trejos Z.Y."/>
            <person name="Trevino B.K."/>
            <person name="Ukegbu O.N."/>
            <person name="Urban J.B."/>
            <person name="Vasquez L.I."/>
            <person name="Vera V.A."/>
            <person name="Villasana D.M."/>
            <person name="Wang L."/>
            <person name="Ward-Moore S."/>
            <person name="Warren J.T."/>
            <person name="Wei X."/>
            <person name="White F."/>
            <person name="Williamson A.L."/>
            <person name="Wleczyk R."/>
            <person name="Wooden H.S."/>
            <person name="Wooden S.H."/>
            <person name="Yen J."/>
            <person name="Yoon L."/>
            <person name="Yoon V."/>
            <person name="Zorrilla S.E."/>
            <person name="Nelson D."/>
            <person name="Kucherlapati R."/>
            <person name="Weinstock G."/>
            <person name="Gibbs R.A."/>
        </authorList>
    </citation>
    <scope>NUCLEOTIDE SEQUENCE [LARGE SCALE GENOMIC DNA]</scope>
</reference>
<reference key="2">
    <citation type="submission" date="2005-07" db="EMBL/GenBank/DDBJ databases">
        <authorList>
            <person name="Mural R.J."/>
            <person name="Istrail S."/>
            <person name="Sutton G.G."/>
            <person name="Florea L."/>
            <person name="Halpern A.L."/>
            <person name="Mobarry C.M."/>
            <person name="Lippert R."/>
            <person name="Walenz B."/>
            <person name="Shatkay H."/>
            <person name="Dew I."/>
            <person name="Miller J.R."/>
            <person name="Flanigan M.J."/>
            <person name="Edwards N.J."/>
            <person name="Bolanos R."/>
            <person name="Fasulo D."/>
            <person name="Halldorsson B.V."/>
            <person name="Hannenhalli S."/>
            <person name="Turner R."/>
            <person name="Yooseph S."/>
            <person name="Lu F."/>
            <person name="Nusskern D.R."/>
            <person name="Shue B.C."/>
            <person name="Zheng X.H."/>
            <person name="Zhong F."/>
            <person name="Delcher A.L."/>
            <person name="Huson D.H."/>
            <person name="Kravitz S.A."/>
            <person name="Mouchard L."/>
            <person name="Reinert K."/>
            <person name="Remington K.A."/>
            <person name="Clark A.G."/>
            <person name="Waterman M.S."/>
            <person name="Eichler E.E."/>
            <person name="Adams M.D."/>
            <person name="Hunkapiller M.W."/>
            <person name="Myers E.W."/>
            <person name="Venter J.C."/>
        </authorList>
    </citation>
    <scope>NUCLEOTIDE SEQUENCE [LARGE SCALE GENOMIC DNA]</scope>
</reference>
<keyword id="KW-1003">Cell membrane</keyword>
<keyword id="KW-1015">Disulfide bond</keyword>
<keyword id="KW-0297">G-protein coupled receptor</keyword>
<keyword id="KW-0325">Glycoprotein</keyword>
<keyword id="KW-0472">Membrane</keyword>
<keyword id="KW-0552">Olfaction</keyword>
<keyword id="KW-0675">Receptor</keyword>
<keyword id="KW-1185">Reference proteome</keyword>
<keyword id="KW-0716">Sensory transduction</keyword>
<keyword id="KW-0807">Transducer</keyword>
<keyword id="KW-0812">Transmembrane</keyword>
<keyword id="KW-1133">Transmembrane helix</keyword>
<feature type="chain" id="PRO_0000309493" description="Olfactory receptor 6C70">
    <location>
        <begin position="1"/>
        <end position="312"/>
    </location>
</feature>
<feature type="topological domain" description="Extracellular" evidence="1">
    <location>
        <begin position="1"/>
        <end position="22"/>
    </location>
</feature>
<feature type="transmembrane region" description="Helical; Name=1" evidence="1">
    <location>
        <begin position="23"/>
        <end position="43"/>
    </location>
</feature>
<feature type="topological domain" description="Cytoplasmic" evidence="1">
    <location>
        <begin position="44"/>
        <end position="63"/>
    </location>
</feature>
<feature type="transmembrane region" description="Helical; Name=2" evidence="1">
    <location>
        <begin position="64"/>
        <end position="84"/>
    </location>
</feature>
<feature type="topological domain" description="Extracellular" evidence="1">
    <location>
        <begin position="85"/>
        <end position="95"/>
    </location>
</feature>
<feature type="transmembrane region" description="Helical; Name=3" evidence="1">
    <location>
        <begin position="96"/>
        <end position="116"/>
    </location>
</feature>
<feature type="topological domain" description="Cytoplasmic" evidence="1">
    <location>
        <begin position="117"/>
        <end position="141"/>
    </location>
</feature>
<feature type="transmembrane region" description="Helical; Name=4" evidence="1">
    <location>
        <begin position="142"/>
        <end position="162"/>
    </location>
</feature>
<feature type="topological domain" description="Extracellular" evidence="1">
    <location>
        <begin position="163"/>
        <end position="194"/>
    </location>
</feature>
<feature type="transmembrane region" description="Helical; Name=5" evidence="1">
    <location>
        <begin position="195"/>
        <end position="215"/>
    </location>
</feature>
<feature type="topological domain" description="Cytoplasmic" evidence="1">
    <location>
        <begin position="216"/>
        <end position="237"/>
    </location>
</feature>
<feature type="transmembrane region" description="Helical; Name=6" evidence="1">
    <location>
        <begin position="238"/>
        <end position="258"/>
    </location>
</feature>
<feature type="topological domain" description="Extracellular" evidence="1">
    <location>
        <begin position="259"/>
        <end position="272"/>
    </location>
</feature>
<feature type="transmembrane region" description="Helical; Name=7" evidence="1">
    <location>
        <begin position="273"/>
        <end position="290"/>
    </location>
</feature>
<feature type="topological domain" description="Cytoplasmic" evidence="1">
    <location>
        <begin position="291"/>
        <end position="312"/>
    </location>
</feature>
<feature type="glycosylation site" description="N-linked (GlcNAc...) asparagine" evidence="1">
    <location>
        <position position="3"/>
    </location>
</feature>
<feature type="disulfide bond" evidence="2">
    <location>
        <begin position="95"/>
        <end position="177"/>
    </location>
</feature>
<feature type="sequence variant" id="VAR_036971" description="In dbSNP:rs10747756.">
    <original>L</original>
    <variation>P</variation>
    <location>
        <position position="181"/>
    </location>
</feature>
<feature type="sequence variant" id="VAR_062050" description="In dbSNP:rs60683621.">
    <original>K</original>
    <variation>N</variation>
    <location>
        <position position="233"/>
    </location>
</feature>
<sequence>MKNHTRQIEFILLGLTDNSQLQIVIFLFLLLNCVLSMIGNFTIIALILLDSQLKTPMYFFLRNFSFLEISFTTACIPRFLITIVTREKTISCNGCISQLFFYIFLGVTEFFLLAALSYDRYVAICKPLRYMSIMSNKVCYQLVFSSWVTGFLIIFTPLILGLNLDFCASNIIDHFICDISLILQLSCSDTHLLELIAFLLAVMTLIVTLFLVILSYSYIIKTILKFPSAQQKKKAFSTCSSHMIVVSITYGSCMFIYIKPSANERVALSKGVTVLNTSVAPLLNPFIYTLRNQQVKQAFKAVFRKIFSASDK</sequence>
<comment type="function">
    <text evidence="3">Odorant receptor.</text>
</comment>
<comment type="subcellular location">
    <subcellularLocation>
        <location>Cell membrane</location>
        <topology>Multi-pass membrane protein</topology>
    </subcellularLocation>
</comment>
<comment type="similarity">
    <text evidence="2">Belongs to the G-protein coupled receptor 1 family.</text>
</comment>
<comment type="online information" name="Human Olfactory Receptor Data Exploratorium (HORDE)">
    <link uri="http://genome.weizmann.ac.il/horde/card/index/symbol:OR6C70"/>
</comment>
<proteinExistence type="inferred from homology"/>
<protein>
    <recommendedName>
        <fullName>Olfactory receptor 6C70</fullName>
    </recommendedName>
</protein>